<proteinExistence type="inferred from homology"/>
<sequence>MGQKINPLGFRLGATQGHHSLWFAQPKNYSEDLQEDQKIRDCIKNYIKKNMKIFSSVEGIACIEIQKRIDLIQVIIYMGFPKLLIEHQKIEELQMNIQKELNSVNRKLNMAITRIANPYGHPNILAEFIAGQLKNRVSFRKAMKKAIELTEQAGTKGIQIQIAGRIDGKEIARVEWIREGRVPLQTIKAKIDYCSYTVRTIYGALGIKIWIFVDE</sequence>
<keyword id="KW-0150">Chloroplast</keyword>
<keyword id="KW-0934">Plastid</keyword>
<keyword id="KW-0687">Ribonucleoprotein</keyword>
<keyword id="KW-0689">Ribosomal protein</keyword>
<keyword id="KW-0694">RNA-binding</keyword>
<keyword id="KW-0699">rRNA-binding</keyword>
<gene>
    <name type="primary">rps3</name>
    <name type="ordered locus">MoinCp059</name>
</gene>
<evidence type="ECO:0000250" key="1"/>
<evidence type="ECO:0000305" key="2"/>
<organism>
    <name type="scientific">Morus indica</name>
    <name type="common">Mulberry</name>
    <dbReference type="NCBI Taxonomy" id="248361"/>
    <lineage>
        <taxon>Eukaryota</taxon>
        <taxon>Viridiplantae</taxon>
        <taxon>Streptophyta</taxon>
        <taxon>Embryophyta</taxon>
        <taxon>Tracheophyta</taxon>
        <taxon>Spermatophyta</taxon>
        <taxon>Magnoliopsida</taxon>
        <taxon>eudicotyledons</taxon>
        <taxon>Gunneridae</taxon>
        <taxon>Pentapetalae</taxon>
        <taxon>rosids</taxon>
        <taxon>fabids</taxon>
        <taxon>Rosales</taxon>
        <taxon>Moraceae</taxon>
        <taxon>Moreae</taxon>
        <taxon>Morus</taxon>
    </lineage>
</organism>
<accession>Q09WX9</accession>
<geneLocation type="chloroplast"/>
<protein>
    <recommendedName>
        <fullName evidence="2">Small ribosomal subunit protein uS3c</fullName>
    </recommendedName>
    <alternativeName>
        <fullName>30S ribosomal protein S3, chloroplastic</fullName>
    </alternativeName>
</protein>
<feature type="chain" id="PRO_0000276995" description="Small ribosomal subunit protein uS3c">
    <location>
        <begin position="1"/>
        <end position="215"/>
    </location>
</feature>
<feature type="domain" description="KH type-2">
    <location>
        <begin position="43"/>
        <end position="116"/>
    </location>
</feature>
<comment type="subunit">
    <text evidence="1">Part of the 30S ribosomal subunit.</text>
</comment>
<comment type="subcellular location">
    <subcellularLocation>
        <location>Plastid</location>
        <location>Chloroplast</location>
    </subcellularLocation>
</comment>
<comment type="similarity">
    <text evidence="2">Belongs to the universal ribosomal protein uS3 family.</text>
</comment>
<name>RR3_MORIN</name>
<dbReference type="EMBL" id="DQ226511">
    <property type="protein sequence ID" value="ABB20995.1"/>
    <property type="molecule type" value="Genomic_DNA"/>
</dbReference>
<dbReference type="RefSeq" id="YP_762299.1">
    <property type="nucleotide sequence ID" value="NC_008359.1"/>
</dbReference>
<dbReference type="SMR" id="Q09WX9"/>
<dbReference type="GeneID" id="4290635"/>
<dbReference type="GO" id="GO:0009507">
    <property type="term" value="C:chloroplast"/>
    <property type="evidence" value="ECO:0007669"/>
    <property type="project" value="UniProtKB-SubCell"/>
</dbReference>
<dbReference type="GO" id="GO:0022627">
    <property type="term" value="C:cytosolic small ribosomal subunit"/>
    <property type="evidence" value="ECO:0007669"/>
    <property type="project" value="TreeGrafter"/>
</dbReference>
<dbReference type="GO" id="GO:0019843">
    <property type="term" value="F:rRNA binding"/>
    <property type="evidence" value="ECO:0007669"/>
    <property type="project" value="UniProtKB-KW"/>
</dbReference>
<dbReference type="GO" id="GO:0003735">
    <property type="term" value="F:structural constituent of ribosome"/>
    <property type="evidence" value="ECO:0007669"/>
    <property type="project" value="InterPro"/>
</dbReference>
<dbReference type="GO" id="GO:0006412">
    <property type="term" value="P:translation"/>
    <property type="evidence" value="ECO:0007669"/>
    <property type="project" value="UniProtKB-UniRule"/>
</dbReference>
<dbReference type="CDD" id="cd02412">
    <property type="entry name" value="KH-II_30S_S3"/>
    <property type="match status" value="1"/>
</dbReference>
<dbReference type="FunFam" id="3.30.1140.32:FF:000003">
    <property type="entry name" value="30S ribosomal protein S3, chloroplastic"/>
    <property type="match status" value="1"/>
</dbReference>
<dbReference type="FunFam" id="3.30.300.20:FF:000008">
    <property type="entry name" value="30S ribosomal protein S3, chloroplastic"/>
    <property type="match status" value="1"/>
</dbReference>
<dbReference type="Gene3D" id="3.30.300.20">
    <property type="match status" value="1"/>
</dbReference>
<dbReference type="Gene3D" id="3.30.1140.32">
    <property type="entry name" value="Ribosomal protein S3, C-terminal domain"/>
    <property type="match status" value="1"/>
</dbReference>
<dbReference type="HAMAP" id="MF_01309_B">
    <property type="entry name" value="Ribosomal_uS3_B"/>
    <property type="match status" value="1"/>
</dbReference>
<dbReference type="InterPro" id="IPR015946">
    <property type="entry name" value="KH_dom-like_a/b"/>
</dbReference>
<dbReference type="InterPro" id="IPR009019">
    <property type="entry name" value="KH_sf_prok-type"/>
</dbReference>
<dbReference type="InterPro" id="IPR036419">
    <property type="entry name" value="Ribosomal_S3_C_sf"/>
</dbReference>
<dbReference type="InterPro" id="IPR005704">
    <property type="entry name" value="Ribosomal_uS3_bac-typ"/>
</dbReference>
<dbReference type="InterPro" id="IPR001351">
    <property type="entry name" value="Ribosomal_uS3_C"/>
</dbReference>
<dbReference type="InterPro" id="IPR018280">
    <property type="entry name" value="Ribosomal_uS3_CS"/>
</dbReference>
<dbReference type="NCBIfam" id="TIGR01009">
    <property type="entry name" value="rpsC_bact"/>
    <property type="match status" value="1"/>
</dbReference>
<dbReference type="PANTHER" id="PTHR11760">
    <property type="entry name" value="30S/40S RIBOSOMAL PROTEIN S3"/>
    <property type="match status" value="1"/>
</dbReference>
<dbReference type="PANTHER" id="PTHR11760:SF19">
    <property type="entry name" value="SMALL RIBOSOMAL SUBUNIT PROTEIN US3C"/>
    <property type="match status" value="1"/>
</dbReference>
<dbReference type="Pfam" id="PF00189">
    <property type="entry name" value="Ribosomal_S3_C"/>
    <property type="match status" value="1"/>
</dbReference>
<dbReference type="SUPFAM" id="SSF54814">
    <property type="entry name" value="Prokaryotic type KH domain (KH-domain type II)"/>
    <property type="match status" value="1"/>
</dbReference>
<dbReference type="SUPFAM" id="SSF54821">
    <property type="entry name" value="Ribosomal protein S3 C-terminal domain"/>
    <property type="match status" value="1"/>
</dbReference>
<dbReference type="PROSITE" id="PS00548">
    <property type="entry name" value="RIBOSOMAL_S3"/>
    <property type="match status" value="1"/>
</dbReference>
<reference key="1">
    <citation type="submission" date="2005-09" db="EMBL/GenBank/DDBJ databases">
        <title>The chloroplast genome of mulberry: structural features and comparative analysis.</title>
        <authorList>
            <person name="Ravi V."/>
            <person name="Khurana J.P."/>
            <person name="Tyagi A.K."/>
            <person name="Khurana P."/>
        </authorList>
    </citation>
    <scope>NUCLEOTIDE SEQUENCE [LARGE SCALE GENOMIC DNA]</scope>
    <source>
        <strain>cv. K2</strain>
    </source>
</reference>